<keyword id="KW-0067">ATP-binding</keyword>
<keyword id="KW-0963">Cytoplasm</keyword>
<keyword id="KW-0436">Ligase</keyword>
<keyword id="KW-0547">Nucleotide-binding</keyword>
<keyword id="KW-0566">Pantothenate biosynthesis</keyword>
<accession>Q0HRH5</accession>
<sequence>MITSAHIDDIRTQVRAWRAQGETVAFVPTMGNLHQGHITLVKEAAKKCDHVVVSIFVNPMQFGQNEDLDAYPRTLEADSQALTVAGAELLFTPTPAIIYPKGLAQQTYVEVPGISDVLCGASRPGHFRGVATIVCKLFNIVLPDVAFFGNKDYQQLLVIRTMVEDLSLPIEIIGVDTIREASGLAMSSRNGYLTEEEKAAAPALKKAIDAMAQGIKQGVSIEQVTEEAKASLIAAGFTPDYLEVRHATTLANAEPQDQALVILAAAYLGKARLIDNLRFDR</sequence>
<comment type="function">
    <text evidence="1">Catalyzes the condensation of pantoate with beta-alanine in an ATP-dependent reaction via a pantoyl-adenylate intermediate.</text>
</comment>
<comment type="catalytic activity">
    <reaction evidence="1">
        <text>(R)-pantoate + beta-alanine + ATP = (R)-pantothenate + AMP + diphosphate + H(+)</text>
        <dbReference type="Rhea" id="RHEA:10912"/>
        <dbReference type="ChEBI" id="CHEBI:15378"/>
        <dbReference type="ChEBI" id="CHEBI:15980"/>
        <dbReference type="ChEBI" id="CHEBI:29032"/>
        <dbReference type="ChEBI" id="CHEBI:30616"/>
        <dbReference type="ChEBI" id="CHEBI:33019"/>
        <dbReference type="ChEBI" id="CHEBI:57966"/>
        <dbReference type="ChEBI" id="CHEBI:456215"/>
        <dbReference type="EC" id="6.3.2.1"/>
    </reaction>
</comment>
<comment type="pathway">
    <text evidence="1">Cofactor biosynthesis; (R)-pantothenate biosynthesis; (R)-pantothenate from (R)-pantoate and beta-alanine: step 1/1.</text>
</comment>
<comment type="subunit">
    <text evidence="1">Homodimer.</text>
</comment>
<comment type="subcellular location">
    <subcellularLocation>
        <location evidence="1">Cytoplasm</location>
    </subcellularLocation>
</comment>
<comment type="miscellaneous">
    <text evidence="1">The reaction proceeds by a bi uni uni bi ping pong mechanism.</text>
</comment>
<comment type="similarity">
    <text evidence="1">Belongs to the pantothenate synthetase family.</text>
</comment>
<feature type="chain" id="PRO_0000305549" description="Pantothenate synthetase">
    <location>
        <begin position="1"/>
        <end position="281"/>
    </location>
</feature>
<feature type="active site" description="Proton donor" evidence="1">
    <location>
        <position position="37"/>
    </location>
</feature>
<feature type="binding site" evidence="1">
    <location>
        <begin position="30"/>
        <end position="37"/>
    </location>
    <ligand>
        <name>ATP</name>
        <dbReference type="ChEBI" id="CHEBI:30616"/>
    </ligand>
</feature>
<feature type="binding site" evidence="1">
    <location>
        <position position="61"/>
    </location>
    <ligand>
        <name>(R)-pantoate</name>
        <dbReference type="ChEBI" id="CHEBI:15980"/>
    </ligand>
</feature>
<feature type="binding site" evidence="1">
    <location>
        <position position="61"/>
    </location>
    <ligand>
        <name>beta-alanine</name>
        <dbReference type="ChEBI" id="CHEBI:57966"/>
    </ligand>
</feature>
<feature type="binding site" evidence="1">
    <location>
        <begin position="149"/>
        <end position="152"/>
    </location>
    <ligand>
        <name>ATP</name>
        <dbReference type="ChEBI" id="CHEBI:30616"/>
    </ligand>
</feature>
<feature type="binding site" evidence="1">
    <location>
        <position position="155"/>
    </location>
    <ligand>
        <name>(R)-pantoate</name>
        <dbReference type="ChEBI" id="CHEBI:15980"/>
    </ligand>
</feature>
<feature type="binding site" evidence="1">
    <location>
        <position position="178"/>
    </location>
    <ligand>
        <name>ATP</name>
        <dbReference type="ChEBI" id="CHEBI:30616"/>
    </ligand>
</feature>
<feature type="binding site" evidence="1">
    <location>
        <begin position="186"/>
        <end position="189"/>
    </location>
    <ligand>
        <name>ATP</name>
        <dbReference type="ChEBI" id="CHEBI:30616"/>
    </ligand>
</feature>
<organism>
    <name type="scientific">Shewanella sp. (strain MR-7)</name>
    <dbReference type="NCBI Taxonomy" id="60481"/>
    <lineage>
        <taxon>Bacteria</taxon>
        <taxon>Pseudomonadati</taxon>
        <taxon>Pseudomonadota</taxon>
        <taxon>Gammaproteobacteria</taxon>
        <taxon>Alteromonadales</taxon>
        <taxon>Shewanellaceae</taxon>
        <taxon>Shewanella</taxon>
    </lineage>
</organism>
<evidence type="ECO:0000255" key="1">
    <source>
        <dbReference type="HAMAP-Rule" id="MF_00158"/>
    </source>
</evidence>
<proteinExistence type="inferred from homology"/>
<gene>
    <name evidence="1" type="primary">panC</name>
    <name type="ordered locus">Shewmr7_3297</name>
</gene>
<dbReference type="EC" id="6.3.2.1" evidence="1"/>
<dbReference type="EMBL" id="CP000444">
    <property type="protein sequence ID" value="ABI44280.1"/>
    <property type="molecule type" value="Genomic_DNA"/>
</dbReference>
<dbReference type="SMR" id="Q0HRH5"/>
<dbReference type="KEGG" id="shm:Shewmr7_3297"/>
<dbReference type="HOGENOM" id="CLU_047148_0_0_6"/>
<dbReference type="UniPathway" id="UPA00028">
    <property type="reaction ID" value="UER00005"/>
</dbReference>
<dbReference type="GO" id="GO:0005829">
    <property type="term" value="C:cytosol"/>
    <property type="evidence" value="ECO:0007669"/>
    <property type="project" value="TreeGrafter"/>
</dbReference>
<dbReference type="GO" id="GO:0005524">
    <property type="term" value="F:ATP binding"/>
    <property type="evidence" value="ECO:0007669"/>
    <property type="project" value="UniProtKB-KW"/>
</dbReference>
<dbReference type="GO" id="GO:0004592">
    <property type="term" value="F:pantoate-beta-alanine ligase activity"/>
    <property type="evidence" value="ECO:0007669"/>
    <property type="project" value="UniProtKB-UniRule"/>
</dbReference>
<dbReference type="GO" id="GO:0015940">
    <property type="term" value="P:pantothenate biosynthetic process"/>
    <property type="evidence" value="ECO:0007669"/>
    <property type="project" value="UniProtKB-UniRule"/>
</dbReference>
<dbReference type="CDD" id="cd00560">
    <property type="entry name" value="PanC"/>
    <property type="match status" value="1"/>
</dbReference>
<dbReference type="FunFam" id="3.30.1300.10:FF:000001">
    <property type="entry name" value="Pantothenate synthetase"/>
    <property type="match status" value="1"/>
</dbReference>
<dbReference type="FunFam" id="3.40.50.620:FF:000013">
    <property type="entry name" value="Pantothenate synthetase"/>
    <property type="match status" value="1"/>
</dbReference>
<dbReference type="Gene3D" id="3.40.50.620">
    <property type="entry name" value="HUPs"/>
    <property type="match status" value="1"/>
</dbReference>
<dbReference type="Gene3D" id="3.30.1300.10">
    <property type="entry name" value="Pantoate-beta-alanine ligase, C-terminal domain"/>
    <property type="match status" value="1"/>
</dbReference>
<dbReference type="HAMAP" id="MF_00158">
    <property type="entry name" value="PanC"/>
    <property type="match status" value="1"/>
</dbReference>
<dbReference type="InterPro" id="IPR004821">
    <property type="entry name" value="Cyt_trans-like"/>
</dbReference>
<dbReference type="InterPro" id="IPR003721">
    <property type="entry name" value="Pantoate_ligase"/>
</dbReference>
<dbReference type="InterPro" id="IPR042176">
    <property type="entry name" value="Pantoate_ligase_C"/>
</dbReference>
<dbReference type="InterPro" id="IPR014729">
    <property type="entry name" value="Rossmann-like_a/b/a_fold"/>
</dbReference>
<dbReference type="NCBIfam" id="TIGR00125">
    <property type="entry name" value="cyt_tran_rel"/>
    <property type="match status" value="1"/>
</dbReference>
<dbReference type="NCBIfam" id="TIGR00018">
    <property type="entry name" value="panC"/>
    <property type="match status" value="1"/>
</dbReference>
<dbReference type="PANTHER" id="PTHR21299">
    <property type="entry name" value="CYTIDYLATE KINASE/PANTOATE-BETA-ALANINE LIGASE"/>
    <property type="match status" value="1"/>
</dbReference>
<dbReference type="PANTHER" id="PTHR21299:SF1">
    <property type="entry name" value="PANTOATE--BETA-ALANINE LIGASE"/>
    <property type="match status" value="1"/>
</dbReference>
<dbReference type="Pfam" id="PF02569">
    <property type="entry name" value="Pantoate_ligase"/>
    <property type="match status" value="1"/>
</dbReference>
<dbReference type="SUPFAM" id="SSF52374">
    <property type="entry name" value="Nucleotidylyl transferase"/>
    <property type="match status" value="1"/>
</dbReference>
<name>PANC_SHESR</name>
<protein>
    <recommendedName>
        <fullName evidence="1">Pantothenate synthetase</fullName>
        <shortName evidence="1">PS</shortName>
        <ecNumber evidence="1">6.3.2.1</ecNumber>
    </recommendedName>
    <alternativeName>
        <fullName evidence="1">Pantoate--beta-alanine ligase</fullName>
    </alternativeName>
    <alternativeName>
        <fullName evidence="1">Pantoate-activating enzyme</fullName>
    </alternativeName>
</protein>
<reference key="1">
    <citation type="submission" date="2006-08" db="EMBL/GenBank/DDBJ databases">
        <title>Complete sequence of chromosome 1 of Shewanella sp. MR-7.</title>
        <authorList>
            <person name="Copeland A."/>
            <person name="Lucas S."/>
            <person name="Lapidus A."/>
            <person name="Barry K."/>
            <person name="Detter J.C."/>
            <person name="Glavina del Rio T."/>
            <person name="Hammon N."/>
            <person name="Israni S."/>
            <person name="Dalin E."/>
            <person name="Tice H."/>
            <person name="Pitluck S."/>
            <person name="Kiss H."/>
            <person name="Brettin T."/>
            <person name="Bruce D."/>
            <person name="Han C."/>
            <person name="Tapia R."/>
            <person name="Gilna P."/>
            <person name="Schmutz J."/>
            <person name="Larimer F."/>
            <person name="Land M."/>
            <person name="Hauser L."/>
            <person name="Kyrpides N."/>
            <person name="Mikhailova N."/>
            <person name="Nealson K."/>
            <person name="Konstantinidis K."/>
            <person name="Klappenbach J."/>
            <person name="Tiedje J."/>
            <person name="Richardson P."/>
        </authorList>
    </citation>
    <scope>NUCLEOTIDE SEQUENCE [LARGE SCALE GENOMIC DNA]</scope>
    <source>
        <strain>MR-7</strain>
    </source>
</reference>